<dbReference type="EC" id="2.1.2.11" evidence="1"/>
<dbReference type="EMBL" id="CP001029">
    <property type="protein sequence ID" value="ACB79902.1"/>
    <property type="molecule type" value="Genomic_DNA"/>
</dbReference>
<dbReference type="RefSeq" id="WP_012453649.1">
    <property type="nucleotide sequence ID" value="NC_010725.1"/>
</dbReference>
<dbReference type="SMR" id="B1ZHG6"/>
<dbReference type="STRING" id="441620.Mpop_1739"/>
<dbReference type="KEGG" id="mpo:Mpop_1739"/>
<dbReference type="eggNOG" id="COG0413">
    <property type="taxonomic scope" value="Bacteria"/>
</dbReference>
<dbReference type="HOGENOM" id="CLU_036645_1_0_5"/>
<dbReference type="OrthoDB" id="9781789at2"/>
<dbReference type="UniPathway" id="UPA00028">
    <property type="reaction ID" value="UER00003"/>
</dbReference>
<dbReference type="Proteomes" id="UP000007136">
    <property type="component" value="Chromosome"/>
</dbReference>
<dbReference type="GO" id="GO:0005737">
    <property type="term" value="C:cytoplasm"/>
    <property type="evidence" value="ECO:0007669"/>
    <property type="project" value="UniProtKB-SubCell"/>
</dbReference>
<dbReference type="GO" id="GO:0003864">
    <property type="term" value="F:3-methyl-2-oxobutanoate hydroxymethyltransferase activity"/>
    <property type="evidence" value="ECO:0007669"/>
    <property type="project" value="UniProtKB-UniRule"/>
</dbReference>
<dbReference type="GO" id="GO:0000287">
    <property type="term" value="F:magnesium ion binding"/>
    <property type="evidence" value="ECO:0007669"/>
    <property type="project" value="TreeGrafter"/>
</dbReference>
<dbReference type="GO" id="GO:0015940">
    <property type="term" value="P:pantothenate biosynthetic process"/>
    <property type="evidence" value="ECO:0007669"/>
    <property type="project" value="UniProtKB-UniRule"/>
</dbReference>
<dbReference type="CDD" id="cd06557">
    <property type="entry name" value="KPHMT-like"/>
    <property type="match status" value="1"/>
</dbReference>
<dbReference type="FunFam" id="3.20.20.60:FF:000003">
    <property type="entry name" value="3-methyl-2-oxobutanoate hydroxymethyltransferase"/>
    <property type="match status" value="1"/>
</dbReference>
<dbReference type="Gene3D" id="3.20.20.60">
    <property type="entry name" value="Phosphoenolpyruvate-binding domains"/>
    <property type="match status" value="1"/>
</dbReference>
<dbReference type="HAMAP" id="MF_00156">
    <property type="entry name" value="PanB"/>
    <property type="match status" value="1"/>
</dbReference>
<dbReference type="InterPro" id="IPR003700">
    <property type="entry name" value="Pantoate_hydroxy_MeTrfase"/>
</dbReference>
<dbReference type="InterPro" id="IPR015813">
    <property type="entry name" value="Pyrv/PenolPyrv_kinase-like_dom"/>
</dbReference>
<dbReference type="InterPro" id="IPR040442">
    <property type="entry name" value="Pyrv_kinase-like_dom_sf"/>
</dbReference>
<dbReference type="NCBIfam" id="TIGR00222">
    <property type="entry name" value="panB"/>
    <property type="match status" value="1"/>
</dbReference>
<dbReference type="NCBIfam" id="NF001452">
    <property type="entry name" value="PRK00311.1"/>
    <property type="match status" value="1"/>
</dbReference>
<dbReference type="PANTHER" id="PTHR20881">
    <property type="entry name" value="3-METHYL-2-OXOBUTANOATE HYDROXYMETHYLTRANSFERASE"/>
    <property type="match status" value="1"/>
</dbReference>
<dbReference type="PANTHER" id="PTHR20881:SF0">
    <property type="entry name" value="3-METHYL-2-OXOBUTANOATE HYDROXYMETHYLTRANSFERASE"/>
    <property type="match status" value="1"/>
</dbReference>
<dbReference type="Pfam" id="PF02548">
    <property type="entry name" value="Pantoate_transf"/>
    <property type="match status" value="1"/>
</dbReference>
<dbReference type="PIRSF" id="PIRSF000388">
    <property type="entry name" value="Pantoate_hydroxy_MeTrfase"/>
    <property type="match status" value="1"/>
</dbReference>
<dbReference type="SUPFAM" id="SSF51621">
    <property type="entry name" value="Phosphoenolpyruvate/pyruvate domain"/>
    <property type="match status" value="1"/>
</dbReference>
<sequence length="274" mass="29204">MSQVVHTRRLQAVDLIKRKAEGRKIIALTAYHAHTANIVDSYCDFVLVGDSLGMVMHGMESTLPVTLEMMILQAQAVMRGTARALVVVDMPFGSYEASREQAFLNAARVLKETGAGAVKLEGGARFAETVAFLTERGVPVMGHIGLTPQSVNTMGGFKVQGHGAGDEDRLRADARAISEAGAFAIVMEGIVEPVARAIATDPSIRAATIGIGATAACDGQILVLEDMLGLSDRVPKFVKSYGSLRAHIEEAVRAYADEVQAGRFPADGHTYPPR</sequence>
<name>PANB_METPB</name>
<organism>
    <name type="scientific">Methylorubrum populi (strain ATCC BAA-705 / NCIMB 13946 / BJ001)</name>
    <name type="common">Methylobacterium populi</name>
    <dbReference type="NCBI Taxonomy" id="441620"/>
    <lineage>
        <taxon>Bacteria</taxon>
        <taxon>Pseudomonadati</taxon>
        <taxon>Pseudomonadota</taxon>
        <taxon>Alphaproteobacteria</taxon>
        <taxon>Hyphomicrobiales</taxon>
        <taxon>Methylobacteriaceae</taxon>
        <taxon>Methylorubrum</taxon>
    </lineage>
</organism>
<accession>B1ZHG6</accession>
<evidence type="ECO:0000255" key="1">
    <source>
        <dbReference type="HAMAP-Rule" id="MF_00156"/>
    </source>
</evidence>
<reference key="1">
    <citation type="submission" date="2008-04" db="EMBL/GenBank/DDBJ databases">
        <title>Complete sequence of chromosome of Methylobacterium populi BJ001.</title>
        <authorList>
            <consortium name="US DOE Joint Genome Institute"/>
            <person name="Copeland A."/>
            <person name="Lucas S."/>
            <person name="Lapidus A."/>
            <person name="Glavina del Rio T."/>
            <person name="Dalin E."/>
            <person name="Tice H."/>
            <person name="Bruce D."/>
            <person name="Goodwin L."/>
            <person name="Pitluck S."/>
            <person name="Chertkov O."/>
            <person name="Brettin T."/>
            <person name="Detter J.C."/>
            <person name="Han C."/>
            <person name="Kuske C.R."/>
            <person name="Schmutz J."/>
            <person name="Larimer F."/>
            <person name="Land M."/>
            <person name="Hauser L."/>
            <person name="Kyrpides N."/>
            <person name="Mikhailova N."/>
            <person name="Marx C."/>
            <person name="Richardson P."/>
        </authorList>
    </citation>
    <scope>NUCLEOTIDE SEQUENCE [LARGE SCALE GENOMIC DNA]</scope>
    <source>
        <strain>ATCC BAA-705 / NCIMB 13946 / BJ001</strain>
    </source>
</reference>
<comment type="function">
    <text evidence="1">Catalyzes the reversible reaction in which hydroxymethyl group from 5,10-methylenetetrahydrofolate is transferred onto alpha-ketoisovalerate to form ketopantoate.</text>
</comment>
<comment type="catalytic activity">
    <reaction evidence="1">
        <text>3-methyl-2-oxobutanoate + (6R)-5,10-methylene-5,6,7,8-tetrahydrofolate + H2O = 2-dehydropantoate + (6S)-5,6,7,8-tetrahydrofolate</text>
        <dbReference type="Rhea" id="RHEA:11824"/>
        <dbReference type="ChEBI" id="CHEBI:11561"/>
        <dbReference type="ChEBI" id="CHEBI:11851"/>
        <dbReference type="ChEBI" id="CHEBI:15377"/>
        <dbReference type="ChEBI" id="CHEBI:15636"/>
        <dbReference type="ChEBI" id="CHEBI:57453"/>
        <dbReference type="EC" id="2.1.2.11"/>
    </reaction>
</comment>
<comment type="cofactor">
    <cofactor evidence="1">
        <name>Mg(2+)</name>
        <dbReference type="ChEBI" id="CHEBI:18420"/>
    </cofactor>
    <text evidence="1">Binds 1 Mg(2+) ion per subunit.</text>
</comment>
<comment type="pathway">
    <text evidence="1">Cofactor biosynthesis; (R)-pantothenate biosynthesis; (R)-pantoate from 3-methyl-2-oxobutanoate: step 1/2.</text>
</comment>
<comment type="subunit">
    <text evidence="1">Homodecamer; pentamer of dimers.</text>
</comment>
<comment type="subcellular location">
    <subcellularLocation>
        <location evidence="1">Cytoplasm</location>
    </subcellularLocation>
</comment>
<comment type="similarity">
    <text evidence="1">Belongs to the PanB family.</text>
</comment>
<proteinExistence type="inferred from homology"/>
<gene>
    <name evidence="1" type="primary">panB</name>
    <name type="ordered locus">Mpop_1739</name>
</gene>
<keyword id="KW-0963">Cytoplasm</keyword>
<keyword id="KW-0460">Magnesium</keyword>
<keyword id="KW-0479">Metal-binding</keyword>
<keyword id="KW-0566">Pantothenate biosynthesis</keyword>
<keyword id="KW-0808">Transferase</keyword>
<protein>
    <recommendedName>
        <fullName evidence="1">3-methyl-2-oxobutanoate hydroxymethyltransferase</fullName>
        <ecNumber evidence="1">2.1.2.11</ecNumber>
    </recommendedName>
    <alternativeName>
        <fullName evidence="1">Ketopantoate hydroxymethyltransferase</fullName>
        <shortName evidence="1">KPHMT</shortName>
    </alternativeName>
</protein>
<feature type="chain" id="PRO_1000096984" description="3-methyl-2-oxobutanoate hydroxymethyltransferase">
    <location>
        <begin position="1"/>
        <end position="274"/>
    </location>
</feature>
<feature type="active site" description="Proton acceptor" evidence="1">
    <location>
        <position position="188"/>
    </location>
</feature>
<feature type="binding site" evidence="1">
    <location>
        <begin position="50"/>
        <end position="51"/>
    </location>
    <ligand>
        <name>3-methyl-2-oxobutanoate</name>
        <dbReference type="ChEBI" id="CHEBI:11851"/>
    </ligand>
</feature>
<feature type="binding site" evidence="1">
    <location>
        <position position="50"/>
    </location>
    <ligand>
        <name>Mg(2+)</name>
        <dbReference type="ChEBI" id="CHEBI:18420"/>
    </ligand>
</feature>
<feature type="binding site" evidence="1">
    <location>
        <position position="89"/>
    </location>
    <ligand>
        <name>3-methyl-2-oxobutanoate</name>
        <dbReference type="ChEBI" id="CHEBI:11851"/>
    </ligand>
</feature>
<feature type="binding site" evidence="1">
    <location>
        <position position="89"/>
    </location>
    <ligand>
        <name>Mg(2+)</name>
        <dbReference type="ChEBI" id="CHEBI:18420"/>
    </ligand>
</feature>
<feature type="binding site" evidence="1">
    <location>
        <position position="119"/>
    </location>
    <ligand>
        <name>3-methyl-2-oxobutanoate</name>
        <dbReference type="ChEBI" id="CHEBI:11851"/>
    </ligand>
</feature>
<feature type="binding site" evidence="1">
    <location>
        <position position="121"/>
    </location>
    <ligand>
        <name>Mg(2+)</name>
        <dbReference type="ChEBI" id="CHEBI:18420"/>
    </ligand>
</feature>